<accession>B4SXB9</accession>
<sequence>MKALSKLKAEEGIWMTDVPEPEVGHNDLLIKIRKTAICGTDVHIYNWDDWSQKTIPVPMVVGHEYVGEVVGIGQEVKGFKIGDRVSGEGHITCGHCRNCRGGRTHLCRNTTGVGVNRPGCFAEYLVIPAFNAFKIPDNISDDLASIFDPFGNAVHTALSFDLVGEDVLVSGAGPIGVMAAAVAKHVGARHVVITDVNEYRLELARKMGVTRAVNVAKESLNDVMAELGMTEGFDVGLEMSGAPPAFRTMLDTMNHGGRIAMLGIPPSDMSIDWTKVIFKGLFIKGIYGREMFETWYKMAALIQSGLDLSPIITHRFSIDDFQKGFDAMRSGQSGKVILSWD</sequence>
<proteinExistence type="inferred from homology"/>
<dbReference type="EC" id="1.1.1.103" evidence="1"/>
<dbReference type="EMBL" id="CP001113">
    <property type="protein sequence ID" value="ACF62801.1"/>
    <property type="molecule type" value="Genomic_DNA"/>
</dbReference>
<dbReference type="RefSeq" id="WP_000645990.1">
    <property type="nucleotide sequence ID" value="NZ_CCMR01000004.1"/>
</dbReference>
<dbReference type="SMR" id="B4SXB9"/>
<dbReference type="KEGG" id="see:SNSL254_A3988"/>
<dbReference type="HOGENOM" id="CLU_026673_11_0_6"/>
<dbReference type="UniPathway" id="UPA00046">
    <property type="reaction ID" value="UER00505"/>
</dbReference>
<dbReference type="Proteomes" id="UP000008824">
    <property type="component" value="Chromosome"/>
</dbReference>
<dbReference type="GO" id="GO:0005737">
    <property type="term" value="C:cytoplasm"/>
    <property type="evidence" value="ECO:0007669"/>
    <property type="project" value="UniProtKB-SubCell"/>
</dbReference>
<dbReference type="GO" id="GO:0008743">
    <property type="term" value="F:L-threonine 3-dehydrogenase activity"/>
    <property type="evidence" value="ECO:0007669"/>
    <property type="project" value="UniProtKB-UniRule"/>
</dbReference>
<dbReference type="GO" id="GO:0008270">
    <property type="term" value="F:zinc ion binding"/>
    <property type="evidence" value="ECO:0007669"/>
    <property type="project" value="UniProtKB-UniRule"/>
</dbReference>
<dbReference type="GO" id="GO:0019518">
    <property type="term" value="P:L-threonine catabolic process to glycine"/>
    <property type="evidence" value="ECO:0007669"/>
    <property type="project" value="UniProtKB-UniPathway"/>
</dbReference>
<dbReference type="FunFam" id="3.40.50.720:FF:000059">
    <property type="entry name" value="L-threonine 3-dehydrogenase"/>
    <property type="match status" value="1"/>
</dbReference>
<dbReference type="Gene3D" id="3.90.180.10">
    <property type="entry name" value="Medium-chain alcohol dehydrogenases, catalytic domain"/>
    <property type="match status" value="1"/>
</dbReference>
<dbReference type="Gene3D" id="3.40.50.720">
    <property type="entry name" value="NAD(P)-binding Rossmann-like Domain"/>
    <property type="match status" value="1"/>
</dbReference>
<dbReference type="HAMAP" id="MF_00627">
    <property type="entry name" value="Thr_dehydrog"/>
    <property type="match status" value="1"/>
</dbReference>
<dbReference type="InterPro" id="IPR013149">
    <property type="entry name" value="ADH-like_C"/>
</dbReference>
<dbReference type="InterPro" id="IPR013154">
    <property type="entry name" value="ADH-like_N"/>
</dbReference>
<dbReference type="InterPro" id="IPR002328">
    <property type="entry name" value="ADH_Zn_CS"/>
</dbReference>
<dbReference type="InterPro" id="IPR011032">
    <property type="entry name" value="GroES-like_sf"/>
</dbReference>
<dbReference type="InterPro" id="IPR004627">
    <property type="entry name" value="L-Threonine_3-DHase"/>
</dbReference>
<dbReference type="InterPro" id="IPR036291">
    <property type="entry name" value="NAD(P)-bd_dom_sf"/>
</dbReference>
<dbReference type="InterPro" id="IPR020843">
    <property type="entry name" value="PKS_ER"/>
</dbReference>
<dbReference type="InterPro" id="IPR050129">
    <property type="entry name" value="Zn_alcohol_dh"/>
</dbReference>
<dbReference type="NCBIfam" id="NF003808">
    <property type="entry name" value="PRK05396.1"/>
    <property type="match status" value="1"/>
</dbReference>
<dbReference type="NCBIfam" id="TIGR00692">
    <property type="entry name" value="tdh"/>
    <property type="match status" value="1"/>
</dbReference>
<dbReference type="PANTHER" id="PTHR43401">
    <property type="entry name" value="L-THREONINE 3-DEHYDROGENASE"/>
    <property type="match status" value="1"/>
</dbReference>
<dbReference type="PANTHER" id="PTHR43401:SF2">
    <property type="entry name" value="L-THREONINE 3-DEHYDROGENASE"/>
    <property type="match status" value="1"/>
</dbReference>
<dbReference type="Pfam" id="PF08240">
    <property type="entry name" value="ADH_N"/>
    <property type="match status" value="1"/>
</dbReference>
<dbReference type="Pfam" id="PF00107">
    <property type="entry name" value="ADH_zinc_N"/>
    <property type="match status" value="1"/>
</dbReference>
<dbReference type="SMART" id="SM00829">
    <property type="entry name" value="PKS_ER"/>
    <property type="match status" value="1"/>
</dbReference>
<dbReference type="SUPFAM" id="SSF50129">
    <property type="entry name" value="GroES-like"/>
    <property type="match status" value="1"/>
</dbReference>
<dbReference type="SUPFAM" id="SSF51735">
    <property type="entry name" value="NAD(P)-binding Rossmann-fold domains"/>
    <property type="match status" value="1"/>
</dbReference>
<dbReference type="PROSITE" id="PS00059">
    <property type="entry name" value="ADH_ZINC"/>
    <property type="match status" value="1"/>
</dbReference>
<feature type="chain" id="PRO_1000130563" description="L-threonine 3-dehydrogenase">
    <location>
        <begin position="1"/>
        <end position="341"/>
    </location>
</feature>
<feature type="active site" description="Charge relay system" evidence="1">
    <location>
        <position position="40"/>
    </location>
</feature>
<feature type="active site" description="Charge relay system" evidence="1">
    <location>
        <position position="43"/>
    </location>
</feature>
<feature type="binding site" evidence="1">
    <location>
        <position position="38"/>
    </location>
    <ligand>
        <name>Zn(2+)</name>
        <dbReference type="ChEBI" id="CHEBI:29105"/>
        <label>1</label>
        <note>catalytic</note>
    </ligand>
</feature>
<feature type="binding site" evidence="1">
    <location>
        <position position="63"/>
    </location>
    <ligand>
        <name>Zn(2+)</name>
        <dbReference type="ChEBI" id="CHEBI:29105"/>
        <label>1</label>
        <note>catalytic</note>
    </ligand>
</feature>
<feature type="binding site" evidence="1">
    <location>
        <position position="64"/>
    </location>
    <ligand>
        <name>Zn(2+)</name>
        <dbReference type="ChEBI" id="CHEBI:29105"/>
        <label>1</label>
        <note>catalytic</note>
    </ligand>
</feature>
<feature type="binding site" evidence="1">
    <location>
        <position position="93"/>
    </location>
    <ligand>
        <name>Zn(2+)</name>
        <dbReference type="ChEBI" id="CHEBI:29105"/>
        <label>2</label>
    </ligand>
</feature>
<feature type="binding site" evidence="1">
    <location>
        <position position="96"/>
    </location>
    <ligand>
        <name>Zn(2+)</name>
        <dbReference type="ChEBI" id="CHEBI:29105"/>
        <label>2</label>
    </ligand>
</feature>
<feature type="binding site" evidence="1">
    <location>
        <position position="99"/>
    </location>
    <ligand>
        <name>Zn(2+)</name>
        <dbReference type="ChEBI" id="CHEBI:29105"/>
        <label>2</label>
    </ligand>
</feature>
<feature type="binding site" evidence="1">
    <location>
        <position position="107"/>
    </location>
    <ligand>
        <name>Zn(2+)</name>
        <dbReference type="ChEBI" id="CHEBI:29105"/>
        <label>2</label>
    </ligand>
</feature>
<feature type="binding site" evidence="1">
    <location>
        <position position="175"/>
    </location>
    <ligand>
        <name>NAD(+)</name>
        <dbReference type="ChEBI" id="CHEBI:57540"/>
    </ligand>
</feature>
<feature type="binding site" evidence="1">
    <location>
        <position position="195"/>
    </location>
    <ligand>
        <name>NAD(+)</name>
        <dbReference type="ChEBI" id="CHEBI:57540"/>
    </ligand>
</feature>
<feature type="binding site" evidence="1">
    <location>
        <position position="200"/>
    </location>
    <ligand>
        <name>NAD(+)</name>
        <dbReference type="ChEBI" id="CHEBI:57540"/>
    </ligand>
</feature>
<feature type="binding site" evidence="1">
    <location>
        <begin position="262"/>
        <end position="264"/>
    </location>
    <ligand>
        <name>NAD(+)</name>
        <dbReference type="ChEBI" id="CHEBI:57540"/>
    </ligand>
</feature>
<feature type="binding site" evidence="1">
    <location>
        <begin position="286"/>
        <end position="287"/>
    </location>
    <ligand>
        <name>NAD(+)</name>
        <dbReference type="ChEBI" id="CHEBI:57540"/>
    </ligand>
</feature>
<feature type="site" description="Important for catalytic activity for the proton relay mechanism but does not participate directly in the coordination of zinc atom" evidence="1">
    <location>
        <position position="148"/>
    </location>
</feature>
<protein>
    <recommendedName>
        <fullName evidence="1">L-threonine 3-dehydrogenase</fullName>
        <shortName evidence="1">TDH</shortName>
        <ecNumber evidence="1">1.1.1.103</ecNumber>
    </recommendedName>
</protein>
<gene>
    <name evidence="1" type="primary">tdh</name>
    <name type="ordered locus">SNSL254_A3988</name>
</gene>
<comment type="function">
    <text evidence="1">Catalyzes the NAD(+)-dependent oxidation of L-threonine to 2-amino-3-ketobutyrate.</text>
</comment>
<comment type="catalytic activity">
    <reaction evidence="1">
        <text>L-threonine + NAD(+) = (2S)-2-amino-3-oxobutanoate + NADH + H(+)</text>
        <dbReference type="Rhea" id="RHEA:13161"/>
        <dbReference type="ChEBI" id="CHEBI:15378"/>
        <dbReference type="ChEBI" id="CHEBI:57540"/>
        <dbReference type="ChEBI" id="CHEBI:57926"/>
        <dbReference type="ChEBI" id="CHEBI:57945"/>
        <dbReference type="ChEBI" id="CHEBI:78948"/>
        <dbReference type="EC" id="1.1.1.103"/>
    </reaction>
</comment>
<comment type="cofactor">
    <cofactor evidence="1">
        <name>Zn(2+)</name>
        <dbReference type="ChEBI" id="CHEBI:29105"/>
    </cofactor>
    <text evidence="1">Binds 2 Zn(2+) ions per subunit.</text>
</comment>
<comment type="pathway">
    <text evidence="1">Amino-acid degradation; L-threonine degradation via oxydo-reductase pathway; glycine from L-threonine: step 1/2.</text>
</comment>
<comment type="subunit">
    <text evidence="1">Homotetramer.</text>
</comment>
<comment type="subcellular location">
    <subcellularLocation>
        <location evidence="1">Cytoplasm</location>
    </subcellularLocation>
</comment>
<comment type="similarity">
    <text evidence="1">Belongs to the zinc-containing alcohol dehydrogenase family.</text>
</comment>
<name>TDH_SALNS</name>
<organism>
    <name type="scientific">Salmonella newport (strain SL254)</name>
    <dbReference type="NCBI Taxonomy" id="423368"/>
    <lineage>
        <taxon>Bacteria</taxon>
        <taxon>Pseudomonadati</taxon>
        <taxon>Pseudomonadota</taxon>
        <taxon>Gammaproteobacteria</taxon>
        <taxon>Enterobacterales</taxon>
        <taxon>Enterobacteriaceae</taxon>
        <taxon>Salmonella</taxon>
    </lineage>
</organism>
<keyword id="KW-0963">Cytoplasm</keyword>
<keyword id="KW-0479">Metal-binding</keyword>
<keyword id="KW-0520">NAD</keyword>
<keyword id="KW-0560">Oxidoreductase</keyword>
<keyword id="KW-0862">Zinc</keyword>
<reference key="1">
    <citation type="journal article" date="2011" name="J. Bacteriol.">
        <title>Comparative genomics of 28 Salmonella enterica isolates: evidence for CRISPR-mediated adaptive sublineage evolution.</title>
        <authorList>
            <person name="Fricke W.F."/>
            <person name="Mammel M.K."/>
            <person name="McDermott P.F."/>
            <person name="Tartera C."/>
            <person name="White D.G."/>
            <person name="Leclerc J.E."/>
            <person name="Ravel J."/>
            <person name="Cebula T.A."/>
        </authorList>
    </citation>
    <scope>NUCLEOTIDE SEQUENCE [LARGE SCALE GENOMIC DNA]</scope>
    <source>
        <strain>SL254</strain>
    </source>
</reference>
<evidence type="ECO:0000255" key="1">
    <source>
        <dbReference type="HAMAP-Rule" id="MF_00627"/>
    </source>
</evidence>